<feature type="chain" id="PRO_0000150783" description="Olfactory receptor 52L1">
    <location>
        <begin position="1"/>
        <end position="329"/>
    </location>
</feature>
<feature type="topological domain" description="Extracellular" evidence="1">
    <location>
        <begin position="1"/>
        <end position="43"/>
    </location>
</feature>
<feature type="transmembrane region" description="Helical; Name=1" evidence="1">
    <location>
        <begin position="44"/>
        <end position="64"/>
    </location>
</feature>
<feature type="topological domain" description="Cytoplasmic" evidence="1">
    <location>
        <begin position="65"/>
        <end position="72"/>
    </location>
</feature>
<feature type="transmembrane region" description="Helical; Name=2" evidence="1">
    <location>
        <begin position="73"/>
        <end position="93"/>
    </location>
</feature>
<feature type="topological domain" description="Extracellular" evidence="1">
    <location>
        <begin position="94"/>
        <end position="117"/>
    </location>
</feature>
<feature type="transmembrane region" description="Helical; Name=3" evidence="1">
    <location>
        <begin position="118"/>
        <end position="138"/>
    </location>
</feature>
<feature type="topological domain" description="Cytoplasmic" evidence="1">
    <location>
        <begin position="139"/>
        <end position="157"/>
    </location>
</feature>
<feature type="transmembrane region" description="Helical; Name=4" evidence="1">
    <location>
        <begin position="158"/>
        <end position="178"/>
    </location>
</feature>
<feature type="topological domain" description="Extracellular" evidence="1">
    <location>
        <begin position="179"/>
        <end position="214"/>
    </location>
</feature>
<feature type="transmembrane region" description="Helical; Name=5" evidence="1">
    <location>
        <begin position="215"/>
        <end position="235"/>
    </location>
</feature>
<feature type="topological domain" description="Cytoplasmic" evidence="1">
    <location>
        <begin position="236"/>
        <end position="255"/>
    </location>
</feature>
<feature type="transmembrane region" description="Helical; Name=6" evidence="1">
    <location>
        <begin position="256"/>
        <end position="276"/>
    </location>
</feature>
<feature type="topological domain" description="Extracellular" evidence="1">
    <location>
        <begin position="277"/>
        <end position="291"/>
    </location>
</feature>
<feature type="transmembrane region" description="Helical; Name=7" evidence="1">
    <location>
        <begin position="292"/>
        <end position="312"/>
    </location>
</feature>
<feature type="topological domain" description="Cytoplasmic" evidence="1">
    <location>
        <begin position="313"/>
        <end position="329"/>
    </location>
</feature>
<feature type="glycosylation site" description="N-linked (GlcNAc...) asparagine" evidence="1">
    <location>
        <position position="20"/>
    </location>
</feature>
<feature type="disulfide bond" evidence="2">
    <location>
        <begin position="115"/>
        <end position="207"/>
    </location>
</feature>
<feature type="sequence variant" id="VAR_055078" description="In dbSNP:rs4501959." evidence="3">
    <original>D</original>
    <variation>N</variation>
    <location>
        <position position="88"/>
    </location>
</feature>
<feature type="sequence variant" id="VAR_055079" description="In dbSNP:rs4436525.">
    <original>R</original>
    <variation>C</variation>
    <location>
        <position position="140"/>
    </location>
</feature>
<feature type="sequence variant" id="VAR_055080" description="In dbSNP:rs4436524.">
    <original>R</original>
    <variation>C</variation>
    <location>
        <position position="161"/>
    </location>
</feature>
<feature type="sequence variant" id="VAR_055081" description="In dbSNP:rs4354673.">
    <original>T</original>
    <variation>K</variation>
    <location>
        <position position="183"/>
    </location>
</feature>
<feature type="sequence variant" id="VAR_055082" description="In dbSNP:rs4237768.">
    <original>R</original>
    <variation>W</variation>
    <location>
        <position position="297"/>
    </location>
</feature>
<comment type="function">
    <text evidence="4">Odorant receptor.</text>
</comment>
<comment type="interaction">
    <interactant intactId="EBI-13330637">
        <id>Q8NGH7</id>
    </interactant>
    <interactant intactId="EBI-750671">
        <id>Q15699</id>
        <label>ALX1</label>
    </interactant>
    <organismsDiffer>false</organismsDiffer>
    <experiments>3</experiments>
</comment>
<comment type="subcellular location">
    <subcellularLocation>
        <location>Cell membrane</location>
        <topology>Multi-pass membrane protein</topology>
    </subcellularLocation>
</comment>
<comment type="similarity">
    <text evidence="2">Belongs to the G-protein coupled receptor 1 family.</text>
</comment>
<comment type="caution">
    <text evidence="4">It is uncertain whether Met-1 or Met-16 is the initiator.</text>
</comment>
<comment type="online information" name="Human Olfactory Receptor Data Exploratorium (HORDE)">
    <link uri="http://genome.weizmann.ac.il/horde/card/index/symbol:OR52L1"/>
</comment>
<dbReference type="EMBL" id="AB065819">
    <property type="protein sequence ID" value="BAC06038.1"/>
    <property type="molecule type" value="Genomic_DNA"/>
</dbReference>
<dbReference type="EMBL" id="AC025016">
    <property type="status" value="NOT_ANNOTATED_CDS"/>
    <property type="molecule type" value="Genomic_DNA"/>
</dbReference>
<dbReference type="EMBL" id="AC111177">
    <property type="status" value="NOT_ANNOTATED_CDS"/>
    <property type="molecule type" value="Genomic_DNA"/>
</dbReference>
<dbReference type="EMBL" id="AC131574">
    <property type="status" value="NOT_ANNOTATED_CDS"/>
    <property type="molecule type" value="Genomic_DNA"/>
</dbReference>
<dbReference type="EMBL" id="BC137343">
    <property type="protein sequence ID" value="AAI37344.1"/>
    <property type="molecule type" value="mRNA"/>
</dbReference>
<dbReference type="EMBL" id="BK004253">
    <property type="protein sequence ID" value="DAA04651.1"/>
    <property type="molecule type" value="Genomic_DNA"/>
</dbReference>
<dbReference type="CCDS" id="CCDS44529.1"/>
<dbReference type="RefSeq" id="NP_001005173.3">
    <property type="nucleotide sequence ID" value="NM_001005173.3"/>
</dbReference>
<dbReference type="SMR" id="Q8NGH7"/>
<dbReference type="BioGRID" id="130790">
    <property type="interactions" value="2"/>
</dbReference>
<dbReference type="FunCoup" id="Q8NGH7">
    <property type="interactions" value="499"/>
</dbReference>
<dbReference type="IntAct" id="Q8NGH7">
    <property type="interactions" value="1"/>
</dbReference>
<dbReference type="STRING" id="9606.ENSP00000330338"/>
<dbReference type="GlyCosmos" id="Q8NGH7">
    <property type="glycosylation" value="1 site, No reported glycans"/>
</dbReference>
<dbReference type="GlyGen" id="Q8NGH7">
    <property type="glycosylation" value="1 site"/>
</dbReference>
<dbReference type="BioMuta" id="OR52L1"/>
<dbReference type="DMDM" id="296439491"/>
<dbReference type="PaxDb" id="9606-ENSP00000330338"/>
<dbReference type="Antibodypedia" id="67196">
    <property type="antibodies" value="59 antibodies from 14 providers"/>
</dbReference>
<dbReference type="DNASU" id="338751"/>
<dbReference type="Ensembl" id="ENST00000332249.4">
    <property type="protein sequence ID" value="ENSP00000330338.4"/>
    <property type="gene ID" value="ENSG00000183313.4"/>
</dbReference>
<dbReference type="GeneID" id="338751"/>
<dbReference type="KEGG" id="hsa:338751"/>
<dbReference type="MANE-Select" id="ENST00000332249.4">
    <property type="protein sequence ID" value="ENSP00000330338.4"/>
    <property type="RefSeq nucleotide sequence ID" value="NM_001005173.3"/>
    <property type="RefSeq protein sequence ID" value="NP_001005173.3"/>
</dbReference>
<dbReference type="UCSC" id="uc001mcd.2">
    <property type="organism name" value="human"/>
</dbReference>
<dbReference type="AGR" id="HGNC:14785"/>
<dbReference type="CTD" id="338751"/>
<dbReference type="DisGeNET" id="338751"/>
<dbReference type="GeneCards" id="OR52L1"/>
<dbReference type="HGNC" id="HGNC:14785">
    <property type="gene designation" value="OR52L1"/>
</dbReference>
<dbReference type="HPA" id="ENSG00000183313">
    <property type="expression patterns" value="Not detected"/>
</dbReference>
<dbReference type="neXtProt" id="NX_Q8NGH7"/>
<dbReference type="PharmGKB" id="PA32420"/>
<dbReference type="VEuPathDB" id="HostDB:ENSG00000183313"/>
<dbReference type="eggNOG" id="ENOG502QV28">
    <property type="taxonomic scope" value="Eukaryota"/>
</dbReference>
<dbReference type="GeneTree" id="ENSGT01130000278320"/>
<dbReference type="HOGENOM" id="CLU_012526_0_0_1"/>
<dbReference type="InParanoid" id="Q8NGH7"/>
<dbReference type="OMA" id="CSQTTVN"/>
<dbReference type="OrthoDB" id="5969463at2759"/>
<dbReference type="PAN-GO" id="Q8NGH7">
    <property type="GO annotations" value="0 GO annotations based on evolutionary models"/>
</dbReference>
<dbReference type="PhylomeDB" id="Q8NGH7"/>
<dbReference type="TreeFam" id="TF343679"/>
<dbReference type="PathwayCommons" id="Q8NGH7"/>
<dbReference type="Reactome" id="R-HSA-9752946">
    <property type="pathway name" value="Expression and translocation of olfactory receptors"/>
</dbReference>
<dbReference type="SignaLink" id="Q8NGH7"/>
<dbReference type="BioGRID-ORCS" id="338751">
    <property type="hits" value="9 hits in 742 CRISPR screens"/>
</dbReference>
<dbReference type="GeneWiki" id="OR52L1"/>
<dbReference type="GenomeRNAi" id="338751"/>
<dbReference type="Pharos" id="Q8NGH7">
    <property type="development level" value="Tdark"/>
</dbReference>
<dbReference type="PRO" id="PR:Q8NGH7"/>
<dbReference type="Proteomes" id="UP000005640">
    <property type="component" value="Chromosome 11"/>
</dbReference>
<dbReference type="RNAct" id="Q8NGH7">
    <property type="molecule type" value="protein"/>
</dbReference>
<dbReference type="Bgee" id="ENSG00000183313">
    <property type="expression patterns" value="Expressed in ventricular zone and 3 other cell types or tissues"/>
</dbReference>
<dbReference type="GO" id="GO:0005886">
    <property type="term" value="C:plasma membrane"/>
    <property type="evidence" value="ECO:0000318"/>
    <property type="project" value="GO_Central"/>
</dbReference>
<dbReference type="GO" id="GO:0004930">
    <property type="term" value="F:G protein-coupled receptor activity"/>
    <property type="evidence" value="ECO:0007669"/>
    <property type="project" value="UniProtKB-KW"/>
</dbReference>
<dbReference type="GO" id="GO:0004984">
    <property type="term" value="F:olfactory receptor activity"/>
    <property type="evidence" value="ECO:0000318"/>
    <property type="project" value="GO_Central"/>
</dbReference>
<dbReference type="FunFam" id="1.20.1070.10:FF:000006">
    <property type="entry name" value="Olfactory receptor"/>
    <property type="match status" value="1"/>
</dbReference>
<dbReference type="Gene3D" id="1.20.1070.10">
    <property type="entry name" value="Rhodopsin 7-helix transmembrane proteins"/>
    <property type="match status" value="1"/>
</dbReference>
<dbReference type="InterPro" id="IPR000276">
    <property type="entry name" value="GPCR_Rhodpsn"/>
</dbReference>
<dbReference type="InterPro" id="IPR017452">
    <property type="entry name" value="GPCR_Rhodpsn_7TM"/>
</dbReference>
<dbReference type="InterPro" id="IPR000725">
    <property type="entry name" value="Olfact_rcpt"/>
</dbReference>
<dbReference type="InterPro" id="IPR050402">
    <property type="entry name" value="OR51/52/56-like"/>
</dbReference>
<dbReference type="PANTHER" id="PTHR26450:SF96">
    <property type="entry name" value="OLFACTORY RECEPTOR 52L1"/>
    <property type="match status" value="1"/>
</dbReference>
<dbReference type="PANTHER" id="PTHR26450">
    <property type="entry name" value="OLFACTORY RECEPTOR 56B1-RELATED"/>
    <property type="match status" value="1"/>
</dbReference>
<dbReference type="Pfam" id="PF13853">
    <property type="entry name" value="7tm_4"/>
    <property type="match status" value="1"/>
</dbReference>
<dbReference type="PRINTS" id="PR00237">
    <property type="entry name" value="GPCRRHODOPSN"/>
</dbReference>
<dbReference type="PRINTS" id="PR00245">
    <property type="entry name" value="OLFACTORYR"/>
</dbReference>
<dbReference type="SUPFAM" id="SSF81321">
    <property type="entry name" value="Family A G protein-coupled receptor-like"/>
    <property type="match status" value="1"/>
</dbReference>
<dbReference type="PROSITE" id="PS50262">
    <property type="entry name" value="G_PROTEIN_RECEP_F1_2"/>
    <property type="match status" value="1"/>
</dbReference>
<reference key="1">
    <citation type="submission" date="2001-07" db="EMBL/GenBank/DDBJ databases">
        <title>Genome-wide discovery and analysis of human seven transmembrane helix receptor genes.</title>
        <authorList>
            <person name="Suwa M."/>
            <person name="Sato T."/>
            <person name="Okouchi I."/>
            <person name="Arita M."/>
            <person name="Futami K."/>
            <person name="Matsumoto S."/>
            <person name="Tsutsumi S."/>
            <person name="Aburatani H."/>
            <person name="Asai K."/>
            <person name="Akiyama Y."/>
        </authorList>
    </citation>
    <scope>NUCLEOTIDE SEQUENCE [GENOMIC DNA]</scope>
</reference>
<reference key="2">
    <citation type="journal article" date="2006" name="Nature">
        <title>Human chromosome 11 DNA sequence and analysis including novel gene identification.</title>
        <authorList>
            <person name="Taylor T.D."/>
            <person name="Noguchi H."/>
            <person name="Totoki Y."/>
            <person name="Toyoda A."/>
            <person name="Kuroki Y."/>
            <person name="Dewar K."/>
            <person name="Lloyd C."/>
            <person name="Itoh T."/>
            <person name="Takeda T."/>
            <person name="Kim D.-W."/>
            <person name="She X."/>
            <person name="Barlow K.F."/>
            <person name="Bloom T."/>
            <person name="Bruford E."/>
            <person name="Chang J.L."/>
            <person name="Cuomo C.A."/>
            <person name="Eichler E."/>
            <person name="FitzGerald M.G."/>
            <person name="Jaffe D.B."/>
            <person name="LaButti K."/>
            <person name="Nicol R."/>
            <person name="Park H.-S."/>
            <person name="Seaman C."/>
            <person name="Sougnez C."/>
            <person name="Yang X."/>
            <person name="Zimmer A.R."/>
            <person name="Zody M.C."/>
            <person name="Birren B.W."/>
            <person name="Nusbaum C."/>
            <person name="Fujiyama A."/>
            <person name="Hattori M."/>
            <person name="Rogers J."/>
            <person name="Lander E.S."/>
            <person name="Sakaki Y."/>
        </authorList>
    </citation>
    <scope>NUCLEOTIDE SEQUENCE [LARGE SCALE GENOMIC DNA]</scope>
</reference>
<reference key="3">
    <citation type="journal article" date="2004" name="Genome Res.">
        <title>The status, quality, and expansion of the NIH full-length cDNA project: the Mammalian Gene Collection (MGC).</title>
        <authorList>
            <consortium name="The MGC Project Team"/>
        </authorList>
    </citation>
    <scope>NUCLEOTIDE SEQUENCE [LARGE SCALE MRNA]</scope>
    <scope>VARIANT ASN-88</scope>
</reference>
<reference key="4">
    <citation type="journal article" date="2004" name="Proc. Natl. Acad. Sci. U.S.A.">
        <title>The human olfactory receptor gene family.</title>
        <authorList>
            <person name="Malnic B."/>
            <person name="Godfrey P.A."/>
            <person name="Buck L.B."/>
        </authorList>
    </citation>
    <scope>IDENTIFICATION</scope>
</reference>
<reference key="5">
    <citation type="journal article" date="2004" name="Proc. Natl. Acad. Sci. U.S.A.">
        <authorList>
            <person name="Malnic B."/>
            <person name="Godfrey P.A."/>
            <person name="Buck L.B."/>
        </authorList>
    </citation>
    <scope>ERRATUM OF PUBMED:14983052</scope>
</reference>
<protein>
    <recommendedName>
        <fullName>Olfactory receptor 52L1</fullName>
    </recommendedName>
    <alternativeName>
        <fullName>Olfactory receptor OR11-50</fullName>
    </alternativeName>
</protein>
<evidence type="ECO:0000255" key="1"/>
<evidence type="ECO:0000255" key="2">
    <source>
        <dbReference type="PROSITE-ProRule" id="PRU00521"/>
    </source>
</evidence>
<evidence type="ECO:0000269" key="3">
    <source>
    </source>
</evidence>
<evidence type="ECO:0000305" key="4"/>
<accession>Q8NGH7</accession>
<accession>B2RPA6</accession>
<accession>Q6IFK9</accession>
<sequence length="329" mass="36270">MTLVSFFSFLSKPLIMLLSNSSWRLSQPSFLLVGIPGLEESQHWIALPLGILYLLALVGNVTILFIIWMDPSLHQSMYLFLSMLAAIDLVLASSTAPKALAVLLVHAHEIGYIVCLIQMFFIHAFSSMESGVLVAMALDRYVAICHPLHHSTILHPGVIGRIGMVVLVRGLLLLIPFPILLGTLIFCQATIIGHAYCEHMAVVKLACSETTVNRAYGLTMALLVIGLDVLAIGVSYAHILQAVLKVPGSEARLKAFSTCGSHICVILVFYVPGIFSFLTHRFGHHVPHHVHVLLATRYLLMPPALNPLVYGVKTQQIRQRVLRVFTQKD</sequence>
<gene>
    <name type="primary">OR52L1</name>
</gene>
<keyword id="KW-1003">Cell membrane</keyword>
<keyword id="KW-1015">Disulfide bond</keyword>
<keyword id="KW-0297">G-protein coupled receptor</keyword>
<keyword id="KW-0325">Glycoprotein</keyword>
<keyword id="KW-0472">Membrane</keyword>
<keyword id="KW-0552">Olfaction</keyword>
<keyword id="KW-0675">Receptor</keyword>
<keyword id="KW-1185">Reference proteome</keyword>
<keyword id="KW-0716">Sensory transduction</keyword>
<keyword id="KW-0807">Transducer</keyword>
<keyword id="KW-0812">Transmembrane</keyword>
<keyword id="KW-1133">Transmembrane helix</keyword>
<name>O52L1_HUMAN</name>
<organism>
    <name type="scientific">Homo sapiens</name>
    <name type="common">Human</name>
    <dbReference type="NCBI Taxonomy" id="9606"/>
    <lineage>
        <taxon>Eukaryota</taxon>
        <taxon>Metazoa</taxon>
        <taxon>Chordata</taxon>
        <taxon>Craniata</taxon>
        <taxon>Vertebrata</taxon>
        <taxon>Euteleostomi</taxon>
        <taxon>Mammalia</taxon>
        <taxon>Eutheria</taxon>
        <taxon>Euarchontoglires</taxon>
        <taxon>Primates</taxon>
        <taxon>Haplorrhini</taxon>
        <taxon>Catarrhini</taxon>
        <taxon>Hominidae</taxon>
        <taxon>Homo</taxon>
    </lineage>
</organism>
<proteinExistence type="evidence at protein level"/>